<accession>Q9ZCX8</accession>
<dbReference type="EMBL" id="AJ235272">
    <property type="protein sequence ID" value="CAA15021.1"/>
    <property type="molecule type" value="Genomic_DNA"/>
</dbReference>
<dbReference type="PIR" id="C71662">
    <property type="entry name" value="C71662"/>
</dbReference>
<dbReference type="RefSeq" id="NP_220945.1">
    <property type="nucleotide sequence ID" value="NC_000963.1"/>
</dbReference>
<dbReference type="RefSeq" id="WP_004597884.1">
    <property type="nucleotide sequence ID" value="NC_000963.1"/>
</dbReference>
<dbReference type="SMR" id="Q9ZCX8"/>
<dbReference type="STRING" id="272947.gene:17555653"/>
<dbReference type="EnsemblBacteria" id="CAA15021">
    <property type="protein sequence ID" value="CAA15021"/>
    <property type="gene ID" value="CAA15021"/>
</dbReference>
<dbReference type="KEGG" id="rpr:RP573"/>
<dbReference type="PATRIC" id="fig|272947.5.peg.590"/>
<dbReference type="eggNOG" id="COG2847">
    <property type="taxonomic scope" value="Bacteria"/>
</dbReference>
<dbReference type="HOGENOM" id="CLU_1531396_0_0_5"/>
<dbReference type="OrthoDB" id="9796962at2"/>
<dbReference type="Proteomes" id="UP000002480">
    <property type="component" value="Chromosome"/>
</dbReference>
<dbReference type="Gene3D" id="2.60.40.1890">
    <property type="entry name" value="PCu(A)C copper chaperone"/>
    <property type="match status" value="1"/>
</dbReference>
<dbReference type="InterPro" id="IPR007410">
    <property type="entry name" value="PCuAC"/>
</dbReference>
<dbReference type="InterPro" id="IPR036182">
    <property type="entry name" value="PCuAC_sf"/>
</dbReference>
<dbReference type="PANTHER" id="PTHR36302">
    <property type="entry name" value="BLR7088 PROTEIN"/>
    <property type="match status" value="1"/>
</dbReference>
<dbReference type="PANTHER" id="PTHR36302:SF1">
    <property type="entry name" value="COPPER CHAPERONE PCU(A)C"/>
    <property type="match status" value="1"/>
</dbReference>
<dbReference type="Pfam" id="PF04314">
    <property type="entry name" value="PCuAC"/>
    <property type="match status" value="1"/>
</dbReference>
<dbReference type="SUPFAM" id="SSF110087">
    <property type="entry name" value="DR1885-like metal-binding protein"/>
    <property type="match status" value="1"/>
</dbReference>
<organism>
    <name type="scientific">Rickettsia prowazekii (strain Madrid E)</name>
    <dbReference type="NCBI Taxonomy" id="272947"/>
    <lineage>
        <taxon>Bacteria</taxon>
        <taxon>Pseudomonadati</taxon>
        <taxon>Pseudomonadota</taxon>
        <taxon>Alphaproteobacteria</taxon>
        <taxon>Rickettsiales</taxon>
        <taxon>Rickettsiaceae</taxon>
        <taxon>Rickettsieae</taxon>
        <taxon>Rickettsia</taxon>
        <taxon>typhus group</taxon>
    </lineage>
</organism>
<gene>
    <name type="ordered locus">RP573</name>
</gene>
<name>Y573_RICPR</name>
<reference key="1">
    <citation type="journal article" date="1998" name="Nature">
        <title>The genome sequence of Rickettsia prowazekii and the origin of mitochondria.</title>
        <authorList>
            <person name="Andersson S.G.E."/>
            <person name="Zomorodipour A."/>
            <person name="Andersson J.O."/>
            <person name="Sicheritz-Ponten T."/>
            <person name="Alsmark U.C.M."/>
            <person name="Podowski R.M."/>
            <person name="Naeslund A.K."/>
            <person name="Eriksson A.-S."/>
            <person name="Winkler H.H."/>
            <person name="Kurland C.G."/>
        </authorList>
    </citation>
    <scope>NUCLEOTIDE SEQUENCE [LARGE SCALE GENOMIC DNA]</scope>
    <source>
        <strain>Madrid E</strain>
    </source>
</reference>
<protein>
    <recommendedName>
        <fullName>Uncharacterized protein RP573</fullName>
    </recommendedName>
</protein>
<proteinExistence type="predicted"/>
<keyword id="KW-1185">Reference proteome</keyword>
<feature type="chain" id="PRO_0000101398" description="Uncharacterized protein RP573">
    <location>
        <begin position="1"/>
        <end position="181"/>
    </location>
</feature>
<sequence length="181" mass="20100">MLKTVLVSFINLICALSYADQTTQNPNLTSVASNVDVASNQSDDLLPAEAAVHFVQPWARPTINVQGKVSNSAMYFTLINTRNKSYQLVNISSDKIGGIEIHQTINDQGVNKMVKVDYPFLISGNINVDFKPGSRHIMLYDPKVDLNAGDEFQITFFFDDNTQKIVNVKVANDNPYNKIGN</sequence>